<geneLocation type="chloroplast"/>
<sequence length="184" mass="21386">MNWRSERIWIELITGSRKTSNFCWACILFLGSLGFLLVGTSSYLGKNLISLLPSQQILFFPQGIVMSFYGIAGLFISSYLWCTISWNVGSGYDRFDRKEGIVCIFRWGFPGINRRIFLRFLMRDIQSIRMEVKEGLYSRRVLYMEIRGQGAIPLTRTDDNLTPREIEQKAAELAYFLRVPIELK</sequence>
<organism>
    <name type="scientific">Chloranthus spicatus</name>
    <name type="common">Chulantree</name>
    <name type="synonym">Nigrina spicata</name>
    <dbReference type="NCBI Taxonomy" id="13006"/>
    <lineage>
        <taxon>Eukaryota</taxon>
        <taxon>Viridiplantae</taxon>
        <taxon>Streptophyta</taxon>
        <taxon>Embryophyta</taxon>
        <taxon>Tracheophyta</taxon>
        <taxon>Spermatophyta</taxon>
        <taxon>Magnoliopsida</taxon>
        <taxon>Chloranthales</taxon>
        <taxon>Chloranthaceae</taxon>
        <taxon>Chloranthus</taxon>
    </lineage>
</organism>
<keyword id="KW-0150">Chloroplast</keyword>
<keyword id="KW-0472">Membrane</keyword>
<keyword id="KW-0602">Photosynthesis</keyword>
<keyword id="KW-0934">Plastid</keyword>
<keyword id="KW-0793">Thylakoid</keyword>
<keyword id="KW-0812">Transmembrane</keyword>
<keyword id="KW-1133">Transmembrane helix</keyword>
<gene>
    <name evidence="1" type="primary">ycf4</name>
</gene>
<feature type="chain" id="PRO_0000326000" description="Photosystem I assembly protein Ycf4">
    <location>
        <begin position="1"/>
        <end position="184"/>
    </location>
</feature>
<feature type="transmembrane region" description="Helical" evidence="1">
    <location>
        <begin position="22"/>
        <end position="42"/>
    </location>
</feature>
<feature type="transmembrane region" description="Helical" evidence="1">
    <location>
        <begin position="57"/>
        <end position="77"/>
    </location>
</feature>
<name>YCF4_CHLSC</name>
<accession>A6MMD3</accession>
<reference key="1">
    <citation type="journal article" date="2007" name="Mol. Phylogenet. Evol.">
        <title>Phylogenetic and evolutionary implications of complete chloroplast genome sequences of four early-diverging angiosperms: Buxus (Buxaceae), Chloranthus (Chloranthaceae), Dioscorea (Dioscoreaceae), and Illicium (Schisandraceae).</title>
        <authorList>
            <person name="Hansen D.R."/>
            <person name="Dastidar S.G."/>
            <person name="Cai Z."/>
            <person name="Penaflor C."/>
            <person name="Kuehl J.V."/>
            <person name="Boore J.L."/>
            <person name="Jansen R.K."/>
        </authorList>
    </citation>
    <scope>NUCLEOTIDE SEQUENCE [LARGE SCALE GENOMIC DNA]</scope>
</reference>
<evidence type="ECO:0000255" key="1">
    <source>
        <dbReference type="HAMAP-Rule" id="MF_00437"/>
    </source>
</evidence>
<dbReference type="EMBL" id="EF380352">
    <property type="protein sequence ID" value="ABQ43271.1"/>
    <property type="molecule type" value="Genomic_DNA"/>
</dbReference>
<dbReference type="RefSeq" id="YP_001294109.1">
    <property type="nucleotide sequence ID" value="NC_009598.1"/>
</dbReference>
<dbReference type="GeneID" id="5236438"/>
<dbReference type="GO" id="GO:0009535">
    <property type="term" value="C:chloroplast thylakoid membrane"/>
    <property type="evidence" value="ECO:0007669"/>
    <property type="project" value="UniProtKB-SubCell"/>
</dbReference>
<dbReference type="GO" id="GO:0009522">
    <property type="term" value="C:photosystem I"/>
    <property type="evidence" value="ECO:0007669"/>
    <property type="project" value="InterPro"/>
</dbReference>
<dbReference type="GO" id="GO:0015979">
    <property type="term" value="P:photosynthesis"/>
    <property type="evidence" value="ECO:0007669"/>
    <property type="project" value="UniProtKB-UniRule"/>
</dbReference>
<dbReference type="HAMAP" id="MF_00437">
    <property type="entry name" value="Ycf4"/>
    <property type="match status" value="1"/>
</dbReference>
<dbReference type="InterPro" id="IPR003359">
    <property type="entry name" value="PSI_Ycf4_assembly"/>
</dbReference>
<dbReference type="PANTHER" id="PTHR33288">
    <property type="match status" value="1"/>
</dbReference>
<dbReference type="PANTHER" id="PTHR33288:SF4">
    <property type="entry name" value="PHOTOSYSTEM I ASSEMBLY PROTEIN YCF4"/>
    <property type="match status" value="1"/>
</dbReference>
<dbReference type="Pfam" id="PF02392">
    <property type="entry name" value="Ycf4"/>
    <property type="match status" value="1"/>
</dbReference>
<proteinExistence type="inferred from homology"/>
<protein>
    <recommendedName>
        <fullName evidence="1">Photosystem I assembly protein Ycf4</fullName>
    </recommendedName>
</protein>
<comment type="function">
    <text evidence="1">Seems to be required for the assembly of the photosystem I complex.</text>
</comment>
<comment type="subcellular location">
    <subcellularLocation>
        <location evidence="1">Plastid</location>
        <location evidence="1">Chloroplast thylakoid membrane</location>
        <topology evidence="1">Multi-pass membrane protein</topology>
    </subcellularLocation>
</comment>
<comment type="similarity">
    <text evidence="1">Belongs to the Ycf4 family.</text>
</comment>